<feature type="chain" id="PRO_0000239883" description="Urease subunit alpha">
    <location>
        <begin position="1"/>
        <end position="581"/>
    </location>
</feature>
<feature type="domain" description="Urease" evidence="1">
    <location>
        <begin position="134"/>
        <end position="581"/>
    </location>
</feature>
<feature type="active site" description="Proton donor" evidence="1">
    <location>
        <position position="325"/>
    </location>
</feature>
<feature type="binding site" evidence="1">
    <location>
        <position position="139"/>
    </location>
    <ligand>
        <name>Ni(2+)</name>
        <dbReference type="ChEBI" id="CHEBI:49786"/>
        <label>1</label>
    </ligand>
</feature>
<feature type="binding site" evidence="1">
    <location>
        <position position="141"/>
    </location>
    <ligand>
        <name>Ni(2+)</name>
        <dbReference type="ChEBI" id="CHEBI:49786"/>
        <label>1</label>
    </ligand>
</feature>
<feature type="binding site" description="via carbamate group" evidence="1">
    <location>
        <position position="222"/>
    </location>
    <ligand>
        <name>Ni(2+)</name>
        <dbReference type="ChEBI" id="CHEBI:49786"/>
        <label>1</label>
    </ligand>
</feature>
<feature type="binding site" description="via carbamate group" evidence="1">
    <location>
        <position position="222"/>
    </location>
    <ligand>
        <name>Ni(2+)</name>
        <dbReference type="ChEBI" id="CHEBI:49786"/>
        <label>2</label>
    </ligand>
</feature>
<feature type="binding site" evidence="1">
    <location>
        <position position="224"/>
    </location>
    <ligand>
        <name>substrate</name>
    </ligand>
</feature>
<feature type="binding site" evidence="1">
    <location>
        <position position="251"/>
    </location>
    <ligand>
        <name>Ni(2+)</name>
        <dbReference type="ChEBI" id="CHEBI:49786"/>
        <label>2</label>
    </ligand>
</feature>
<feature type="binding site" evidence="1">
    <location>
        <position position="277"/>
    </location>
    <ligand>
        <name>Ni(2+)</name>
        <dbReference type="ChEBI" id="CHEBI:49786"/>
        <label>2</label>
    </ligand>
</feature>
<feature type="binding site" evidence="1">
    <location>
        <position position="365"/>
    </location>
    <ligand>
        <name>Ni(2+)</name>
        <dbReference type="ChEBI" id="CHEBI:49786"/>
        <label>1</label>
    </ligand>
</feature>
<feature type="modified residue" description="N6-carboxylysine" evidence="1">
    <location>
        <position position="222"/>
    </location>
</feature>
<name>URE1_ALBFT</name>
<proteinExistence type="inferred from homology"/>
<evidence type="ECO:0000255" key="1">
    <source>
        <dbReference type="HAMAP-Rule" id="MF_01953"/>
    </source>
</evidence>
<dbReference type="EC" id="3.5.1.5" evidence="1"/>
<dbReference type="EMBL" id="CP000267">
    <property type="protein sequence ID" value="ABD71111.1"/>
    <property type="molecule type" value="Genomic_DNA"/>
</dbReference>
<dbReference type="RefSeq" id="WP_011465674.1">
    <property type="nucleotide sequence ID" value="NC_007908.1"/>
</dbReference>
<dbReference type="SMR" id="Q21SZ2"/>
<dbReference type="STRING" id="338969.Rfer_3402"/>
<dbReference type="KEGG" id="rfr:Rfer_3402"/>
<dbReference type="eggNOG" id="COG0804">
    <property type="taxonomic scope" value="Bacteria"/>
</dbReference>
<dbReference type="HOGENOM" id="CLU_000980_0_0_4"/>
<dbReference type="OrthoDB" id="9802793at2"/>
<dbReference type="UniPathway" id="UPA00258">
    <property type="reaction ID" value="UER00370"/>
</dbReference>
<dbReference type="Proteomes" id="UP000008332">
    <property type="component" value="Chromosome"/>
</dbReference>
<dbReference type="GO" id="GO:0005737">
    <property type="term" value="C:cytoplasm"/>
    <property type="evidence" value="ECO:0007669"/>
    <property type="project" value="UniProtKB-SubCell"/>
</dbReference>
<dbReference type="GO" id="GO:0016151">
    <property type="term" value="F:nickel cation binding"/>
    <property type="evidence" value="ECO:0007669"/>
    <property type="project" value="UniProtKB-UniRule"/>
</dbReference>
<dbReference type="GO" id="GO:0009039">
    <property type="term" value="F:urease activity"/>
    <property type="evidence" value="ECO:0007669"/>
    <property type="project" value="UniProtKB-UniRule"/>
</dbReference>
<dbReference type="GO" id="GO:0043419">
    <property type="term" value="P:urea catabolic process"/>
    <property type="evidence" value="ECO:0007669"/>
    <property type="project" value="UniProtKB-UniRule"/>
</dbReference>
<dbReference type="CDD" id="cd00375">
    <property type="entry name" value="Urease_alpha"/>
    <property type="match status" value="1"/>
</dbReference>
<dbReference type="Gene3D" id="3.20.20.140">
    <property type="entry name" value="Metal-dependent hydrolases"/>
    <property type="match status" value="1"/>
</dbReference>
<dbReference type="Gene3D" id="2.30.40.10">
    <property type="entry name" value="Urease, subunit C, domain 1"/>
    <property type="match status" value="1"/>
</dbReference>
<dbReference type="HAMAP" id="MF_01953">
    <property type="entry name" value="Urease_alpha"/>
    <property type="match status" value="1"/>
</dbReference>
<dbReference type="InterPro" id="IPR006680">
    <property type="entry name" value="Amidohydro-rel"/>
</dbReference>
<dbReference type="InterPro" id="IPR011059">
    <property type="entry name" value="Metal-dep_hydrolase_composite"/>
</dbReference>
<dbReference type="InterPro" id="IPR032466">
    <property type="entry name" value="Metal_Hydrolase"/>
</dbReference>
<dbReference type="InterPro" id="IPR011612">
    <property type="entry name" value="Urease_alpha_N_dom"/>
</dbReference>
<dbReference type="InterPro" id="IPR050112">
    <property type="entry name" value="Urease_alpha_subunit"/>
</dbReference>
<dbReference type="InterPro" id="IPR017950">
    <property type="entry name" value="Urease_AS"/>
</dbReference>
<dbReference type="InterPro" id="IPR005848">
    <property type="entry name" value="Urease_asu"/>
</dbReference>
<dbReference type="InterPro" id="IPR017951">
    <property type="entry name" value="Urease_asu_c"/>
</dbReference>
<dbReference type="InterPro" id="IPR029754">
    <property type="entry name" value="Urease_Ni-bd"/>
</dbReference>
<dbReference type="NCBIfam" id="NF009685">
    <property type="entry name" value="PRK13206.1"/>
    <property type="match status" value="1"/>
</dbReference>
<dbReference type="NCBIfam" id="NF009686">
    <property type="entry name" value="PRK13207.1"/>
    <property type="match status" value="1"/>
</dbReference>
<dbReference type="NCBIfam" id="TIGR01792">
    <property type="entry name" value="urease_alph"/>
    <property type="match status" value="1"/>
</dbReference>
<dbReference type="PANTHER" id="PTHR43440">
    <property type="entry name" value="UREASE"/>
    <property type="match status" value="1"/>
</dbReference>
<dbReference type="PANTHER" id="PTHR43440:SF1">
    <property type="entry name" value="UREASE"/>
    <property type="match status" value="1"/>
</dbReference>
<dbReference type="Pfam" id="PF01979">
    <property type="entry name" value="Amidohydro_1"/>
    <property type="match status" value="1"/>
</dbReference>
<dbReference type="Pfam" id="PF00449">
    <property type="entry name" value="Urease_alpha"/>
    <property type="match status" value="1"/>
</dbReference>
<dbReference type="PRINTS" id="PR01752">
    <property type="entry name" value="UREASE"/>
</dbReference>
<dbReference type="SUPFAM" id="SSF51338">
    <property type="entry name" value="Composite domain of metallo-dependent hydrolases"/>
    <property type="match status" value="2"/>
</dbReference>
<dbReference type="SUPFAM" id="SSF51556">
    <property type="entry name" value="Metallo-dependent hydrolases"/>
    <property type="match status" value="1"/>
</dbReference>
<dbReference type="PROSITE" id="PS01120">
    <property type="entry name" value="UREASE_1"/>
    <property type="match status" value="1"/>
</dbReference>
<dbReference type="PROSITE" id="PS00145">
    <property type="entry name" value="UREASE_2"/>
    <property type="match status" value="1"/>
</dbReference>
<dbReference type="PROSITE" id="PS51368">
    <property type="entry name" value="UREASE_3"/>
    <property type="match status" value="1"/>
</dbReference>
<organism>
    <name type="scientific">Albidiferax ferrireducens (strain ATCC BAA-621 / DSM 15236 / T118)</name>
    <name type="common">Rhodoferax ferrireducens</name>
    <dbReference type="NCBI Taxonomy" id="338969"/>
    <lineage>
        <taxon>Bacteria</taxon>
        <taxon>Pseudomonadati</taxon>
        <taxon>Pseudomonadota</taxon>
        <taxon>Betaproteobacteria</taxon>
        <taxon>Burkholderiales</taxon>
        <taxon>Comamonadaceae</taxon>
        <taxon>Rhodoferax</taxon>
    </lineage>
</organism>
<keyword id="KW-0963">Cytoplasm</keyword>
<keyword id="KW-0378">Hydrolase</keyword>
<keyword id="KW-0479">Metal-binding</keyword>
<keyword id="KW-0533">Nickel</keyword>
<keyword id="KW-1185">Reference proteome</keyword>
<sequence>MATIGRRAYAEMFGPTVGDRVRLADTNLIIEVEDDYTLRAGGYGEEVKFGGGKTIRDGMAQSQRSRAEGAVDTVMTNALIIDHWGIVKADIGLKDSRIVAIGKAGNPDTQPGVDIIIGPGTEVISCEGSIVTAGGFDSHIHFICPQLIEEALSSGITTMTGGGTGPATGTFATTCTPGSWHIERMLQAADAFAMNLGFMGKGNASLPAALHEQINAGALGLKLHEDWGTTPAAIDNCLNVAELTDTQVAIHTDTLNESGFVEDTLAAFKGRSIHTFHTEGAGGGHAPDIMKLVGEPNVLPSSTNPTRPYTVNTLDEHVDMLMVCHHLDAAIAEDLAFAESRIRKETIAAEDILHDLGAISIMSSDSQAMGRVGEVIIRTWQTAHKMKAQRGWLAPPPERSEPVEKLQRNDNYRVKRYLAKYTINPALTHGMAHEVGSIELGKWADLVVWRPAFFGVKPSLIVKGGSIAMAAMGDPNASIPTPQPVHYRPMFGAFGGALARGSLTFVSQAGLNAGIGARYGLSKTLSAVKNIRGIRKEHMVHNHYLPKMEIDAQTYSVRADGELLTCEPAVSLPMTQRYFLF</sequence>
<protein>
    <recommendedName>
        <fullName evidence="1">Urease subunit alpha</fullName>
        <ecNumber evidence="1">3.5.1.5</ecNumber>
    </recommendedName>
    <alternativeName>
        <fullName evidence="1">Urea amidohydrolase subunit alpha</fullName>
    </alternativeName>
</protein>
<accession>Q21SZ2</accession>
<gene>
    <name evidence="1" type="primary">ureC</name>
    <name type="ordered locus">Rfer_3402</name>
</gene>
<comment type="catalytic activity">
    <reaction evidence="1">
        <text>urea + 2 H2O + H(+) = hydrogencarbonate + 2 NH4(+)</text>
        <dbReference type="Rhea" id="RHEA:20557"/>
        <dbReference type="ChEBI" id="CHEBI:15377"/>
        <dbReference type="ChEBI" id="CHEBI:15378"/>
        <dbReference type="ChEBI" id="CHEBI:16199"/>
        <dbReference type="ChEBI" id="CHEBI:17544"/>
        <dbReference type="ChEBI" id="CHEBI:28938"/>
        <dbReference type="EC" id="3.5.1.5"/>
    </reaction>
</comment>
<comment type="cofactor">
    <cofactor evidence="1">
        <name>Ni cation</name>
        <dbReference type="ChEBI" id="CHEBI:25516"/>
    </cofactor>
    <text evidence="1">Binds 2 nickel ions per subunit.</text>
</comment>
<comment type="pathway">
    <text evidence="1">Nitrogen metabolism; urea degradation; CO(2) and NH(3) from urea (urease route): step 1/1.</text>
</comment>
<comment type="subunit">
    <text evidence="1">Heterotrimer of UreA (gamma), UreB (beta) and UreC (alpha) subunits. Three heterotrimers associate to form the active enzyme.</text>
</comment>
<comment type="subcellular location">
    <subcellularLocation>
        <location evidence="1">Cytoplasm</location>
    </subcellularLocation>
</comment>
<comment type="PTM">
    <text evidence="1">Carboxylation allows a single lysine to coordinate two nickel ions.</text>
</comment>
<comment type="similarity">
    <text evidence="1">Belongs to the metallo-dependent hydrolases superfamily. Urease alpha subunit family.</text>
</comment>
<reference key="1">
    <citation type="submission" date="2006-02" db="EMBL/GenBank/DDBJ databases">
        <title>Complete sequence of chromosome of Rhodoferax ferrireducens DSM 15236.</title>
        <authorList>
            <person name="Copeland A."/>
            <person name="Lucas S."/>
            <person name="Lapidus A."/>
            <person name="Barry K."/>
            <person name="Detter J.C."/>
            <person name="Glavina del Rio T."/>
            <person name="Hammon N."/>
            <person name="Israni S."/>
            <person name="Pitluck S."/>
            <person name="Brettin T."/>
            <person name="Bruce D."/>
            <person name="Han C."/>
            <person name="Tapia R."/>
            <person name="Gilna P."/>
            <person name="Kiss H."/>
            <person name="Schmutz J."/>
            <person name="Larimer F."/>
            <person name="Land M."/>
            <person name="Kyrpides N."/>
            <person name="Ivanova N."/>
            <person name="Richardson P."/>
        </authorList>
    </citation>
    <scope>NUCLEOTIDE SEQUENCE [LARGE SCALE GENOMIC DNA]</scope>
    <source>
        <strain>ATCC BAA-621 / DSM 15236 / T118</strain>
    </source>
</reference>